<feature type="chain" id="PRO_0000118649" description="NADH-ubiquinone oxidoreductase subunit 9">
    <location>
        <begin position="1"/>
        <end position="204"/>
    </location>
</feature>
<organism>
    <name type="scientific">Reclinomonas americana</name>
    <dbReference type="NCBI Taxonomy" id="48483"/>
    <lineage>
        <taxon>Eukaryota</taxon>
        <taxon>Discoba</taxon>
        <taxon>Jakobida</taxon>
        <taxon>Histionina</taxon>
        <taxon>Histionidae</taxon>
        <taxon>Reclinomonas</taxon>
    </lineage>
</organism>
<proteinExistence type="inferred from homology"/>
<comment type="function">
    <text evidence="1">Core subunit of the mitochondrial membrane respiratory chain NADH dehydrogenase (Complex I) that is believed to belong to the minimal assembly required for catalysis. Complex I functions in the transfer of electrons from NADH to the respiratory chain. The immediate electron acceptor for the enzyme is believed to be ubiquinone (By similarity).</text>
</comment>
<comment type="catalytic activity">
    <reaction>
        <text>a ubiquinone + NADH + 5 H(+)(in) = a ubiquinol + NAD(+) + 4 H(+)(out)</text>
        <dbReference type="Rhea" id="RHEA:29091"/>
        <dbReference type="Rhea" id="RHEA-COMP:9565"/>
        <dbReference type="Rhea" id="RHEA-COMP:9566"/>
        <dbReference type="ChEBI" id="CHEBI:15378"/>
        <dbReference type="ChEBI" id="CHEBI:16389"/>
        <dbReference type="ChEBI" id="CHEBI:17976"/>
        <dbReference type="ChEBI" id="CHEBI:57540"/>
        <dbReference type="ChEBI" id="CHEBI:57945"/>
        <dbReference type="EC" id="7.1.1.2"/>
    </reaction>
</comment>
<comment type="subunit">
    <text>Complex I is composed of about 30 different subunits.</text>
</comment>
<comment type="subcellular location">
    <subcellularLocation>
        <location evidence="1">Mitochondrion inner membrane</location>
    </subcellularLocation>
    <text evidence="1">Matrix and cytoplasmic side of the mitochondrial inner membrane.</text>
</comment>
<comment type="similarity">
    <text evidence="2">Belongs to the complex I 30 kDa subunit family.</text>
</comment>
<dbReference type="EC" id="7.1.1.2"/>
<dbReference type="EMBL" id="AF007261">
    <property type="protein sequence ID" value="AAD11898.1"/>
    <property type="molecule type" value="Genomic_DNA"/>
</dbReference>
<dbReference type="PIR" id="S78165">
    <property type="entry name" value="S78165"/>
</dbReference>
<dbReference type="RefSeq" id="NP_044783.1">
    <property type="nucleotide sequence ID" value="NC_001823.1"/>
</dbReference>
<dbReference type="SMR" id="O21271"/>
<dbReference type="GeneID" id="801075"/>
<dbReference type="GO" id="GO:0005743">
    <property type="term" value="C:mitochondrial inner membrane"/>
    <property type="evidence" value="ECO:0007669"/>
    <property type="project" value="UniProtKB-SubCell"/>
</dbReference>
<dbReference type="GO" id="GO:0008137">
    <property type="term" value="F:NADH dehydrogenase (ubiquinone) activity"/>
    <property type="evidence" value="ECO:0007669"/>
    <property type="project" value="UniProtKB-EC"/>
</dbReference>
<dbReference type="FunFam" id="3.30.460.80:FF:000002">
    <property type="entry name" value="NADH dehydrogenase iron-sulfur protein 3, mitochondrial"/>
    <property type="match status" value="1"/>
</dbReference>
<dbReference type="Gene3D" id="3.30.460.80">
    <property type="entry name" value="NADH:ubiquinone oxidoreductase, 30kDa subunit"/>
    <property type="match status" value="1"/>
</dbReference>
<dbReference type="HAMAP" id="MF_01357">
    <property type="entry name" value="NDH1_NuoC"/>
    <property type="match status" value="1"/>
</dbReference>
<dbReference type="InterPro" id="IPR010218">
    <property type="entry name" value="NADH_DH_suC"/>
</dbReference>
<dbReference type="InterPro" id="IPR037232">
    <property type="entry name" value="NADH_quin_OxRdtase_su_C/D-like"/>
</dbReference>
<dbReference type="InterPro" id="IPR001268">
    <property type="entry name" value="NADH_UbQ_OxRdtase_30kDa_su"/>
</dbReference>
<dbReference type="InterPro" id="IPR020396">
    <property type="entry name" value="NADH_UbQ_OxRdtase_CS"/>
</dbReference>
<dbReference type="NCBIfam" id="TIGR01961">
    <property type="entry name" value="NuoC_fam"/>
    <property type="match status" value="1"/>
</dbReference>
<dbReference type="NCBIfam" id="NF004733">
    <property type="entry name" value="PRK06074.1-5"/>
    <property type="match status" value="1"/>
</dbReference>
<dbReference type="PANTHER" id="PTHR10884:SF14">
    <property type="entry name" value="NADH DEHYDROGENASE [UBIQUINONE] IRON-SULFUR PROTEIN 3, MITOCHONDRIAL"/>
    <property type="match status" value="1"/>
</dbReference>
<dbReference type="PANTHER" id="PTHR10884">
    <property type="entry name" value="NADH DEHYDROGENASE UBIQUINONE IRON-SULFUR PROTEIN 3"/>
    <property type="match status" value="1"/>
</dbReference>
<dbReference type="Pfam" id="PF00329">
    <property type="entry name" value="Complex1_30kDa"/>
    <property type="match status" value="1"/>
</dbReference>
<dbReference type="SUPFAM" id="SSF143243">
    <property type="entry name" value="Nqo5-like"/>
    <property type="match status" value="1"/>
</dbReference>
<dbReference type="PROSITE" id="PS00542">
    <property type="entry name" value="COMPLEX1_30K"/>
    <property type="match status" value="1"/>
</dbReference>
<keyword id="KW-0249">Electron transport</keyword>
<keyword id="KW-0472">Membrane</keyword>
<keyword id="KW-0496">Mitochondrion</keyword>
<keyword id="KW-0999">Mitochondrion inner membrane</keyword>
<keyword id="KW-0520">NAD</keyword>
<keyword id="KW-0560">Oxidoreductase</keyword>
<keyword id="KW-0679">Respiratory chain</keyword>
<keyword id="KW-1278">Translocase</keyword>
<keyword id="KW-0813">Transport</keyword>
<keyword id="KW-0830">Ubiquinone</keyword>
<name>NDUS3_RECAM</name>
<geneLocation type="mitochondrion"/>
<gene>
    <name type="primary">NAD9</name>
</gene>
<protein>
    <recommendedName>
        <fullName>NADH-ubiquinone oxidoreductase subunit 9</fullName>
        <ecNumber>7.1.1.2</ecNumber>
    </recommendedName>
</protein>
<sequence>MKKQEQNQFLKEFGISLIKMFPKYIDKAIYSKGELTLHVKPTNLIALMKILKNHTNCQFKSLSDLCAVDFPEKKERFEIVYNLLSVRYNSRIRVKTFVDELTPVPSVTCLFQAAGWFEREVWDLFGVYFTNHPDLRRILTDYGFEGHPMRKDFPLTGYVEVRYDDEQKRVVTESLEMTQEFRSFNFTSPWEQIEISKPNIKEKK</sequence>
<accession>O21271</accession>
<reference key="1">
    <citation type="journal article" date="1997" name="Nature">
        <title>An ancestral mitochondrial DNA resembling a eubacterial genome in miniature.</title>
        <authorList>
            <person name="Lang B.F."/>
            <person name="Burger G."/>
            <person name="O'Kelly C.J."/>
            <person name="Cedergren R."/>
            <person name="Golding G.B."/>
            <person name="Lemieux C."/>
            <person name="Sankoff D."/>
            <person name="Turmel M."/>
            <person name="Gray M.W."/>
        </authorList>
    </citation>
    <scope>NUCLEOTIDE SEQUENCE [GENOMIC DNA]</scope>
    <source>
        <strain>ATCC 50394</strain>
    </source>
</reference>
<evidence type="ECO:0000250" key="1"/>
<evidence type="ECO:0000305" key="2"/>